<keyword id="KW-1003">Cell membrane</keyword>
<keyword id="KW-0202">Cytokine</keyword>
<keyword id="KW-1015">Disulfide bond</keyword>
<keyword id="KW-0325">Glycoprotein</keyword>
<keyword id="KW-0472">Membrane</keyword>
<keyword id="KW-1185">Reference proteome</keyword>
<keyword id="KW-0964">Secreted</keyword>
<keyword id="KW-0735">Signal-anchor</keyword>
<keyword id="KW-0812">Transmembrane</keyword>
<keyword id="KW-1133">Transmembrane helix</keyword>
<comment type="function">
    <text evidence="2 3">Cytokine that acts as a ligand to CD40/TNFRSF5 (By similarity). Costimulates T-cell proliferation and cytokine production (By similarity). Its cross-linking on T-cells generates a costimulatory signal which enhances the production of IL4 and IL10 in conjunction with the TCR/CD3 ligation and CD28 costimulation (By similarity). Induces the activation of NF-kappa-B (By similarity). Induces the activation of kinases MAPK8 and PAK2 in T-cells (By similarity). Mediates B-cell proliferation in the absence of co-stimulus as well as IgE production in the presence of IL4 (By similarity). Involved in immunoglobulin class switching (By similarity).</text>
</comment>
<comment type="function">
    <molecule>CD40 ligand, soluble form</molecule>
    <text evidence="3">Acts as a ligand for integrins, specifically ITGA5:ITGB1 and ITGAV:ITGB3; both integrins and the CD40 receptor are required for activation of CD40-CD40LG signaling, which have cell-type dependent effects, such as B-cell activation, NF-kappa-B signaling and anti-apoptotic signaling.</text>
</comment>
<comment type="subunit">
    <text evidence="3">Homotrimer (By similarity). Interacts with CD28 (By similarity). CD40 ligand, soluble form: Exists as either a monomer or a homotrimer (By similarity). Forms a ternary complex between CD40 and integrins for CD40-CD40LG signaling (By similarity).</text>
</comment>
<comment type="subcellular location">
    <subcellularLocation>
        <location evidence="3">Cell membrane</location>
        <topology evidence="3">Single-pass type II membrane protein</topology>
    </subcellularLocation>
    <subcellularLocation>
        <location evidence="3">Cell surface</location>
    </subcellularLocation>
</comment>
<comment type="subcellular location">
    <molecule>CD40 ligand, soluble form</molecule>
    <subcellularLocation>
        <location evidence="3">Secreted</location>
    </subcellularLocation>
    <text evidence="3">Release of soluble CD40L from platelets is partially regulated by GP IIb/IIIa, actin polymerization, and a matrix metalloproteinases (MMP) inhibitor-sensitive pathway.</text>
</comment>
<comment type="PTM">
    <text evidence="3">The soluble form derives from the membrane form by proteolytic processing.</text>
</comment>
<comment type="similarity">
    <text evidence="6">Belongs to the tumor necrosis factor family.</text>
</comment>
<proteinExistence type="evidence at transcript level"/>
<feature type="chain" id="PRO_0000034492" description="CD40 ligand, membrane form">
    <location>
        <begin position="1"/>
        <end position="261"/>
    </location>
</feature>
<feature type="chain" id="PRO_0000034493" description="CD40 ligand, soluble form" evidence="3">
    <location>
        <begin position="113"/>
        <end position="261"/>
    </location>
</feature>
<feature type="topological domain" description="Cytoplasmic" evidence="4">
    <location>
        <begin position="1"/>
        <end position="22"/>
    </location>
</feature>
<feature type="transmembrane region" description="Helical; Signal-anchor for type II membrane protein" evidence="4">
    <location>
        <begin position="23"/>
        <end position="43"/>
    </location>
</feature>
<feature type="topological domain" description="Extracellular" evidence="4">
    <location>
        <begin position="44"/>
        <end position="240"/>
    </location>
</feature>
<feature type="domain" description="THD" evidence="5">
    <location>
        <begin position="122"/>
        <end position="261"/>
    </location>
</feature>
<feature type="site" description="Cleavage" evidence="1">
    <location>
        <begin position="112"/>
        <end position="113"/>
    </location>
</feature>
<feature type="glycosylation site" description="N-linked (GlcNAc...) asparagine" evidence="4">
    <location>
        <position position="240"/>
    </location>
</feature>
<feature type="disulfide bond" evidence="5">
    <location>
        <begin position="178"/>
        <end position="218"/>
    </location>
</feature>
<name>CD40L_PIG</name>
<sequence>MIETYSQPSPRSVAAGPPVSMKIFMYLLTVFLITQMIGSALFAAYLHRRLDKIEDERNLHEDFVFIKTIQRCKQGEGSLSLLNCEEIRSQFEDLVKGIMQSKEVKKKEKSFEMHKGDQDPQIAAHVISEASSKTASVLQWAPKGYYTLSTNLVTLENGRQLAVKRQGIYYIYAQVTFCSNRDAAGQAPFIASLCLRSPSGSERILLRAANTHSSSKPCGQQSIHLGGVFELQPGASVFVNVTDPSQVSHGTGFTSFGLLKL</sequence>
<organism>
    <name type="scientific">Sus scrofa</name>
    <name type="common">Pig</name>
    <dbReference type="NCBI Taxonomy" id="9823"/>
    <lineage>
        <taxon>Eukaryota</taxon>
        <taxon>Metazoa</taxon>
        <taxon>Chordata</taxon>
        <taxon>Craniata</taxon>
        <taxon>Vertebrata</taxon>
        <taxon>Euteleostomi</taxon>
        <taxon>Mammalia</taxon>
        <taxon>Eutheria</taxon>
        <taxon>Laurasiatheria</taxon>
        <taxon>Artiodactyla</taxon>
        <taxon>Suina</taxon>
        <taxon>Suidae</taxon>
        <taxon>Sus</taxon>
    </lineage>
</organism>
<evidence type="ECO:0000250" key="1"/>
<evidence type="ECO:0000250" key="2">
    <source>
        <dbReference type="UniProtKB" id="P27548"/>
    </source>
</evidence>
<evidence type="ECO:0000250" key="3">
    <source>
        <dbReference type="UniProtKB" id="P29965"/>
    </source>
</evidence>
<evidence type="ECO:0000255" key="4"/>
<evidence type="ECO:0000255" key="5">
    <source>
        <dbReference type="PROSITE-ProRule" id="PRU01387"/>
    </source>
</evidence>
<evidence type="ECO:0000305" key="6"/>
<accession>Q95MQ5</accession>
<gene>
    <name type="primary">CD40LG</name>
    <name type="synonym">CD40L</name>
    <name type="synonym">TNFSF5</name>
</gene>
<protein>
    <recommendedName>
        <fullName>CD40 ligand</fullName>
        <shortName>CD40-L</shortName>
    </recommendedName>
    <alternativeName>
        <fullName>Tumor necrosis factor ligand superfamily member 5</fullName>
    </alternativeName>
    <cdAntigenName>CD154</cdAntigenName>
    <component>
        <recommendedName>
            <fullName>CD40 ligand, membrane form</fullName>
        </recommendedName>
    </component>
    <component>
        <recommendedName>
            <fullName evidence="3">CD40 ligand, soluble form</fullName>
            <shortName evidence="3">sCD40L</shortName>
        </recommendedName>
    </component>
</protein>
<dbReference type="EMBL" id="AB040443">
    <property type="protein sequence ID" value="BAB86593.1"/>
    <property type="molecule type" value="mRNA"/>
</dbReference>
<dbReference type="EMBL" id="AF263915">
    <property type="protein sequence ID" value="AAK58524.1"/>
    <property type="molecule type" value="mRNA"/>
</dbReference>
<dbReference type="RefSeq" id="NP_999291.1">
    <property type="nucleotide sequence ID" value="NM_214126.1"/>
</dbReference>
<dbReference type="SMR" id="Q95MQ5"/>
<dbReference type="FunCoup" id="Q95MQ5">
    <property type="interactions" value="146"/>
</dbReference>
<dbReference type="STRING" id="9823.ENSSSCP00000020229"/>
<dbReference type="GlyCosmos" id="Q95MQ5">
    <property type="glycosylation" value="1 site, No reported glycans"/>
</dbReference>
<dbReference type="GlyGen" id="Q95MQ5">
    <property type="glycosylation" value="1 site"/>
</dbReference>
<dbReference type="PaxDb" id="9823-ENSSSCP00000020229"/>
<dbReference type="GeneID" id="397231"/>
<dbReference type="KEGG" id="ssc:397231"/>
<dbReference type="CTD" id="959"/>
<dbReference type="eggNOG" id="KOG3656">
    <property type="taxonomic scope" value="Eukaryota"/>
</dbReference>
<dbReference type="InParanoid" id="Q95MQ5"/>
<dbReference type="OrthoDB" id="8667946at2759"/>
<dbReference type="Proteomes" id="UP000008227">
    <property type="component" value="Unplaced"/>
</dbReference>
<dbReference type="Proteomes" id="UP000314985">
    <property type="component" value="Unplaced"/>
</dbReference>
<dbReference type="Proteomes" id="UP000694570">
    <property type="component" value="Unplaced"/>
</dbReference>
<dbReference type="Proteomes" id="UP000694571">
    <property type="component" value="Unplaced"/>
</dbReference>
<dbReference type="Proteomes" id="UP000694720">
    <property type="component" value="Unplaced"/>
</dbReference>
<dbReference type="Proteomes" id="UP000694722">
    <property type="component" value="Unplaced"/>
</dbReference>
<dbReference type="Proteomes" id="UP000694723">
    <property type="component" value="Unplaced"/>
</dbReference>
<dbReference type="Proteomes" id="UP000694724">
    <property type="component" value="Unplaced"/>
</dbReference>
<dbReference type="Proteomes" id="UP000694725">
    <property type="component" value="Unplaced"/>
</dbReference>
<dbReference type="Proteomes" id="UP000694726">
    <property type="component" value="Unplaced"/>
</dbReference>
<dbReference type="Proteomes" id="UP000694727">
    <property type="component" value="Unplaced"/>
</dbReference>
<dbReference type="Proteomes" id="UP000694728">
    <property type="component" value="Unplaced"/>
</dbReference>
<dbReference type="GO" id="GO:0009986">
    <property type="term" value="C:cell surface"/>
    <property type="evidence" value="ECO:0000250"/>
    <property type="project" value="UniProtKB"/>
</dbReference>
<dbReference type="GO" id="GO:0005615">
    <property type="term" value="C:extracellular space"/>
    <property type="evidence" value="ECO:0000318"/>
    <property type="project" value="GO_Central"/>
</dbReference>
<dbReference type="GO" id="GO:0005886">
    <property type="term" value="C:plasma membrane"/>
    <property type="evidence" value="ECO:0007669"/>
    <property type="project" value="UniProtKB-SubCell"/>
</dbReference>
<dbReference type="GO" id="GO:0005174">
    <property type="term" value="F:CD40 receptor binding"/>
    <property type="evidence" value="ECO:0000250"/>
    <property type="project" value="UniProtKB"/>
</dbReference>
<dbReference type="GO" id="GO:0005125">
    <property type="term" value="F:cytokine activity"/>
    <property type="evidence" value="ECO:0000318"/>
    <property type="project" value="GO_Central"/>
</dbReference>
<dbReference type="GO" id="GO:0043539">
    <property type="term" value="F:protein serine/threonine kinase activator activity"/>
    <property type="evidence" value="ECO:0000250"/>
    <property type="project" value="UniProtKB"/>
</dbReference>
<dbReference type="GO" id="GO:0005164">
    <property type="term" value="F:tumor necrosis factor receptor binding"/>
    <property type="evidence" value="ECO:0007669"/>
    <property type="project" value="InterPro"/>
</dbReference>
<dbReference type="GO" id="GO:0042100">
    <property type="term" value="P:B cell proliferation"/>
    <property type="evidence" value="ECO:0000250"/>
    <property type="project" value="UniProtKB"/>
</dbReference>
<dbReference type="GO" id="GO:0007166">
    <property type="term" value="P:cell surface receptor signaling pathway"/>
    <property type="evidence" value="ECO:0000318"/>
    <property type="project" value="GO_Central"/>
</dbReference>
<dbReference type="GO" id="GO:0006955">
    <property type="term" value="P:immune response"/>
    <property type="evidence" value="ECO:0007669"/>
    <property type="project" value="InterPro"/>
</dbReference>
<dbReference type="GO" id="GO:0006954">
    <property type="term" value="P:inflammatory response"/>
    <property type="evidence" value="ECO:0000250"/>
    <property type="project" value="UniProtKB"/>
</dbReference>
<dbReference type="GO" id="GO:0030168">
    <property type="term" value="P:platelet activation"/>
    <property type="evidence" value="ECO:0000250"/>
    <property type="project" value="UniProtKB"/>
</dbReference>
<dbReference type="GO" id="GO:0043123">
    <property type="term" value="P:positive regulation of canonical NF-kappaB signal transduction"/>
    <property type="evidence" value="ECO:0000318"/>
    <property type="project" value="GO_Central"/>
</dbReference>
<dbReference type="GO" id="GO:2001238">
    <property type="term" value="P:positive regulation of extrinsic apoptotic signaling pathway"/>
    <property type="evidence" value="ECO:0000318"/>
    <property type="project" value="GO_Central"/>
</dbReference>
<dbReference type="GO" id="GO:0032733">
    <property type="term" value="P:positive regulation of interleukin-10 production"/>
    <property type="evidence" value="ECO:0000250"/>
    <property type="project" value="UniProtKB"/>
</dbReference>
<dbReference type="GO" id="GO:0032753">
    <property type="term" value="P:positive regulation of interleukin-4 production"/>
    <property type="evidence" value="ECO:0000250"/>
    <property type="project" value="UniProtKB"/>
</dbReference>
<dbReference type="GO" id="GO:0051092">
    <property type="term" value="P:positive regulation of NF-kappaB transcription factor activity"/>
    <property type="evidence" value="ECO:0000250"/>
    <property type="project" value="UniProtKB"/>
</dbReference>
<dbReference type="GO" id="GO:0042102">
    <property type="term" value="P:positive regulation of T cell proliferation"/>
    <property type="evidence" value="ECO:0000250"/>
    <property type="project" value="UniProtKB"/>
</dbReference>
<dbReference type="CDD" id="cd00184">
    <property type="entry name" value="TNF"/>
    <property type="match status" value="1"/>
</dbReference>
<dbReference type="FunFam" id="2.60.120.40:FF:000013">
    <property type="entry name" value="CD40 ligand"/>
    <property type="match status" value="1"/>
</dbReference>
<dbReference type="Gene3D" id="2.60.120.40">
    <property type="match status" value="1"/>
</dbReference>
<dbReference type="InterPro" id="IPR003263">
    <property type="entry name" value="CD40L"/>
</dbReference>
<dbReference type="InterPro" id="IPR021184">
    <property type="entry name" value="TNF_CS"/>
</dbReference>
<dbReference type="InterPro" id="IPR006052">
    <property type="entry name" value="TNF_dom"/>
</dbReference>
<dbReference type="InterPro" id="IPR008983">
    <property type="entry name" value="Tumour_necrosis_fac-like_dom"/>
</dbReference>
<dbReference type="PANTHER" id="PTHR11471:SF5">
    <property type="entry name" value="CD40 LIGAND"/>
    <property type="match status" value="1"/>
</dbReference>
<dbReference type="PANTHER" id="PTHR11471">
    <property type="entry name" value="TUMOR NECROSIS FACTOR FAMILY MEMBER"/>
    <property type="match status" value="1"/>
</dbReference>
<dbReference type="Pfam" id="PF00229">
    <property type="entry name" value="TNF"/>
    <property type="match status" value="1"/>
</dbReference>
<dbReference type="PIRSF" id="PIRSF016527">
    <property type="entry name" value="TNF_5"/>
    <property type="match status" value="1"/>
</dbReference>
<dbReference type="PRINTS" id="PR01702">
    <property type="entry name" value="CD40LIGAND"/>
</dbReference>
<dbReference type="SMART" id="SM00207">
    <property type="entry name" value="TNF"/>
    <property type="match status" value="1"/>
</dbReference>
<dbReference type="SUPFAM" id="SSF49842">
    <property type="entry name" value="TNF-like"/>
    <property type="match status" value="1"/>
</dbReference>
<dbReference type="PROSITE" id="PS00251">
    <property type="entry name" value="THD_1"/>
    <property type="match status" value="1"/>
</dbReference>
<dbReference type="PROSITE" id="PS50049">
    <property type="entry name" value="THD_2"/>
    <property type="match status" value="1"/>
</dbReference>
<reference key="1">
    <citation type="submission" date="2000-03" db="EMBL/GenBank/DDBJ databases">
        <authorList>
            <person name="Uenishi H."/>
        </authorList>
    </citation>
    <scope>NUCLEOTIDE SEQUENCE [MRNA]</scope>
    <source>
        <tissue>Spleen</tissue>
    </source>
</reference>
<reference key="2">
    <citation type="submission" date="2000-05" db="EMBL/GenBank/DDBJ databases">
        <authorList>
            <person name="Han X."/>
            <person name="Tuch B.E."/>
        </authorList>
    </citation>
    <scope>NUCLEOTIDE SEQUENCE [MRNA] OF 45-227</scope>
</reference>